<name>HEM3_XYLF2</name>
<evidence type="ECO:0000255" key="1">
    <source>
        <dbReference type="HAMAP-Rule" id="MF_00260"/>
    </source>
</evidence>
<comment type="function">
    <text evidence="1">Tetrapolymerization of the monopyrrole PBG into the hydroxymethylbilane pre-uroporphyrinogen in several discrete steps.</text>
</comment>
<comment type="catalytic activity">
    <reaction evidence="1">
        <text>4 porphobilinogen + H2O = hydroxymethylbilane + 4 NH4(+)</text>
        <dbReference type="Rhea" id="RHEA:13185"/>
        <dbReference type="ChEBI" id="CHEBI:15377"/>
        <dbReference type="ChEBI" id="CHEBI:28938"/>
        <dbReference type="ChEBI" id="CHEBI:57845"/>
        <dbReference type="ChEBI" id="CHEBI:58126"/>
        <dbReference type="EC" id="2.5.1.61"/>
    </reaction>
</comment>
<comment type="cofactor">
    <cofactor evidence="1">
        <name>dipyrromethane</name>
        <dbReference type="ChEBI" id="CHEBI:60342"/>
    </cofactor>
    <text evidence="1">Binds 1 dipyrromethane group covalently.</text>
</comment>
<comment type="pathway">
    <text evidence="1">Porphyrin-containing compound metabolism; protoporphyrin-IX biosynthesis; coproporphyrinogen-III from 5-aminolevulinate: step 2/4.</text>
</comment>
<comment type="subunit">
    <text evidence="1">Monomer.</text>
</comment>
<comment type="miscellaneous">
    <text evidence="1">The porphobilinogen subunits are added to the dipyrromethane group.</text>
</comment>
<comment type="similarity">
    <text evidence="1">Belongs to the HMBS family.</text>
</comment>
<protein>
    <recommendedName>
        <fullName evidence="1">Porphobilinogen deaminase</fullName>
        <shortName evidence="1">PBG</shortName>
        <ecNumber evidence="1">2.5.1.61</ecNumber>
    </recommendedName>
    <alternativeName>
        <fullName evidence="1">Hydroxymethylbilane synthase</fullName>
        <shortName evidence="1">HMBS</shortName>
    </alternativeName>
    <alternativeName>
        <fullName evidence="1">Pre-uroporphyrinogen synthase</fullName>
    </alternativeName>
</protein>
<organism>
    <name type="scientific">Xylella fastidiosa (strain M23)</name>
    <dbReference type="NCBI Taxonomy" id="405441"/>
    <lineage>
        <taxon>Bacteria</taxon>
        <taxon>Pseudomonadati</taxon>
        <taxon>Pseudomonadota</taxon>
        <taxon>Gammaproteobacteria</taxon>
        <taxon>Lysobacterales</taxon>
        <taxon>Lysobacteraceae</taxon>
        <taxon>Xylella</taxon>
    </lineage>
</organism>
<gene>
    <name evidence="1" type="primary">hemC</name>
    <name type="ordered locus">XfasM23_1225</name>
</gene>
<dbReference type="EC" id="2.5.1.61" evidence="1"/>
<dbReference type="EMBL" id="CP001011">
    <property type="protein sequence ID" value="ACB92653.1"/>
    <property type="molecule type" value="Genomic_DNA"/>
</dbReference>
<dbReference type="RefSeq" id="WP_004087310.1">
    <property type="nucleotide sequence ID" value="NC_010577.1"/>
</dbReference>
<dbReference type="SMR" id="B2I5K8"/>
<dbReference type="GeneID" id="93904945"/>
<dbReference type="KEGG" id="xfn:XfasM23_1225"/>
<dbReference type="HOGENOM" id="CLU_019704_0_2_6"/>
<dbReference type="UniPathway" id="UPA00251">
    <property type="reaction ID" value="UER00319"/>
</dbReference>
<dbReference type="Proteomes" id="UP000001698">
    <property type="component" value="Chromosome"/>
</dbReference>
<dbReference type="GO" id="GO:0005737">
    <property type="term" value="C:cytoplasm"/>
    <property type="evidence" value="ECO:0007669"/>
    <property type="project" value="TreeGrafter"/>
</dbReference>
<dbReference type="GO" id="GO:0004418">
    <property type="term" value="F:hydroxymethylbilane synthase activity"/>
    <property type="evidence" value="ECO:0007669"/>
    <property type="project" value="UniProtKB-UniRule"/>
</dbReference>
<dbReference type="GO" id="GO:0006782">
    <property type="term" value="P:protoporphyrinogen IX biosynthetic process"/>
    <property type="evidence" value="ECO:0007669"/>
    <property type="project" value="UniProtKB-UniRule"/>
</dbReference>
<dbReference type="CDD" id="cd13646">
    <property type="entry name" value="PBP2_EcHMBS_like"/>
    <property type="match status" value="1"/>
</dbReference>
<dbReference type="FunFam" id="3.40.190.10:FF:000004">
    <property type="entry name" value="Porphobilinogen deaminase"/>
    <property type="match status" value="1"/>
</dbReference>
<dbReference type="FunFam" id="3.40.190.10:FF:000005">
    <property type="entry name" value="Porphobilinogen deaminase"/>
    <property type="match status" value="1"/>
</dbReference>
<dbReference type="Gene3D" id="3.40.190.10">
    <property type="entry name" value="Periplasmic binding protein-like II"/>
    <property type="match status" value="2"/>
</dbReference>
<dbReference type="Gene3D" id="3.30.160.40">
    <property type="entry name" value="Porphobilinogen deaminase, C-terminal domain"/>
    <property type="match status" value="1"/>
</dbReference>
<dbReference type="HAMAP" id="MF_00260">
    <property type="entry name" value="Porphobil_deam"/>
    <property type="match status" value="1"/>
</dbReference>
<dbReference type="InterPro" id="IPR000860">
    <property type="entry name" value="HemC"/>
</dbReference>
<dbReference type="InterPro" id="IPR022419">
    <property type="entry name" value="Porphobilin_deaminase_cofac_BS"/>
</dbReference>
<dbReference type="InterPro" id="IPR022417">
    <property type="entry name" value="Porphobilin_deaminase_N"/>
</dbReference>
<dbReference type="InterPro" id="IPR022418">
    <property type="entry name" value="Porphobilinogen_deaminase_C"/>
</dbReference>
<dbReference type="InterPro" id="IPR036803">
    <property type="entry name" value="Porphobilinogen_deaminase_C_sf"/>
</dbReference>
<dbReference type="NCBIfam" id="TIGR00212">
    <property type="entry name" value="hemC"/>
    <property type="match status" value="1"/>
</dbReference>
<dbReference type="PANTHER" id="PTHR11557">
    <property type="entry name" value="PORPHOBILINOGEN DEAMINASE"/>
    <property type="match status" value="1"/>
</dbReference>
<dbReference type="PANTHER" id="PTHR11557:SF0">
    <property type="entry name" value="PORPHOBILINOGEN DEAMINASE"/>
    <property type="match status" value="1"/>
</dbReference>
<dbReference type="Pfam" id="PF01379">
    <property type="entry name" value="Porphobil_deam"/>
    <property type="match status" value="1"/>
</dbReference>
<dbReference type="Pfam" id="PF03900">
    <property type="entry name" value="Porphobil_deamC"/>
    <property type="match status" value="1"/>
</dbReference>
<dbReference type="PIRSF" id="PIRSF001438">
    <property type="entry name" value="4pyrrol_synth_OHMeBilane_synth"/>
    <property type="match status" value="1"/>
</dbReference>
<dbReference type="PRINTS" id="PR00151">
    <property type="entry name" value="PORPHBDMNASE"/>
</dbReference>
<dbReference type="SUPFAM" id="SSF53850">
    <property type="entry name" value="Periplasmic binding protein-like II"/>
    <property type="match status" value="1"/>
</dbReference>
<dbReference type="SUPFAM" id="SSF54782">
    <property type="entry name" value="Porphobilinogen deaminase (hydroxymethylbilane synthase), C-terminal domain"/>
    <property type="match status" value="1"/>
</dbReference>
<dbReference type="PROSITE" id="PS00533">
    <property type="entry name" value="PORPHOBILINOGEN_DEAM"/>
    <property type="match status" value="1"/>
</dbReference>
<keyword id="KW-0627">Porphyrin biosynthesis</keyword>
<keyword id="KW-0808">Transferase</keyword>
<accession>B2I5K8</accession>
<feature type="chain" id="PRO_1000114186" description="Porphobilinogen deaminase">
    <location>
        <begin position="1"/>
        <end position="305"/>
    </location>
</feature>
<feature type="modified residue" description="S-(dipyrrolylmethanemethyl)cysteine" evidence="1">
    <location>
        <position position="240"/>
    </location>
</feature>
<reference key="1">
    <citation type="journal article" date="2010" name="J. Bacteriol.">
        <title>Whole genome sequences of two Xylella fastidiosa strains (M12 and M23) causing almond leaf scorch disease in California.</title>
        <authorList>
            <person name="Chen J."/>
            <person name="Xie G."/>
            <person name="Han S."/>
            <person name="Chertkov O."/>
            <person name="Sims D."/>
            <person name="Civerolo E.L."/>
        </authorList>
    </citation>
    <scope>NUCLEOTIDE SEQUENCE [LARGE SCALE GENOMIC DNA]</scope>
    <source>
        <strain>M23</strain>
    </source>
</reference>
<sequence length="305" mass="32860">MPLLRIATRKSLLAMWQSEYVAARLRMLCPDLDVVLVPMSTRGDEILDRSLAAIGGKGLFLKELELAMLRGDADCAVHSLKDVPMDLEPPFMLAAVLSRDDPADALISNVYLSLESLPIGARVATSSLRRQAQLRFYRPDLRLFDLRGNVNTRLAKLDNGDYDAIVLACAGLRRLGLEQRMTARLAPPEWLPAPGQGAIAVESLTEDARIGTLLAGLDDLPTRKCVIAERTMNRALHGSCHVPVGAYASYEVGGMRLQGLVGCVADGRLVRAELCSAKDEGDMLGRAVAQCLLDAGAAELLAATA</sequence>
<proteinExistence type="inferred from homology"/>